<keyword id="KW-1035">Host cytoplasm</keyword>
<keyword id="KW-1048">Host nucleus</keyword>
<keyword id="KW-1185">Reference proteome</keyword>
<keyword id="KW-0964">Secreted</keyword>
<keyword id="KW-0732">Signal</keyword>
<keyword id="KW-0843">Virulence</keyword>
<organism>
    <name type="scientific">Phytophthora infestans (strain T30-4)</name>
    <name type="common">Potato late blight agent</name>
    <dbReference type="NCBI Taxonomy" id="403677"/>
    <lineage>
        <taxon>Eukaryota</taxon>
        <taxon>Sar</taxon>
        <taxon>Stramenopiles</taxon>
        <taxon>Oomycota</taxon>
        <taxon>Peronosporales</taxon>
        <taxon>Peronosporaceae</taxon>
        <taxon>Phytophthora</taxon>
    </lineage>
</organism>
<protein>
    <recommendedName>
        <fullName evidence="6">RxLR effector protein PITG_06094</fullName>
    </recommendedName>
</protein>
<reference key="1">
    <citation type="journal article" date="2009" name="Nature">
        <title>Genome sequence and analysis of the Irish potato famine pathogen Phytophthora infestans.</title>
        <authorList>
            <consortium name="The Broad Institute Genome Sequencing Platform"/>
            <person name="Haas B.J."/>
            <person name="Kamoun S."/>
            <person name="Zody M.C."/>
            <person name="Jiang R.H."/>
            <person name="Handsaker R.E."/>
            <person name="Cano L.M."/>
            <person name="Grabherr M."/>
            <person name="Kodira C.D."/>
            <person name="Raffaele S."/>
            <person name="Torto-Alalibo T."/>
            <person name="Bozkurt T.O."/>
            <person name="Ah-Fong A.M."/>
            <person name="Alvarado L."/>
            <person name="Anderson V.L."/>
            <person name="Armstrong M.R."/>
            <person name="Avrova A."/>
            <person name="Baxter L."/>
            <person name="Beynon J."/>
            <person name="Boevink P.C."/>
            <person name="Bollmann S.R."/>
            <person name="Bos J.I."/>
            <person name="Bulone V."/>
            <person name="Cai G."/>
            <person name="Cakir C."/>
            <person name="Carrington J.C."/>
            <person name="Chawner M."/>
            <person name="Conti L."/>
            <person name="Costanzo S."/>
            <person name="Ewan R."/>
            <person name="Fahlgren N."/>
            <person name="Fischbach M.A."/>
            <person name="Fugelstad J."/>
            <person name="Gilroy E.M."/>
            <person name="Gnerre S."/>
            <person name="Green P.J."/>
            <person name="Grenville-Briggs L.J."/>
            <person name="Griffith J."/>
            <person name="Grunwald N.J."/>
            <person name="Horn K."/>
            <person name="Horner N.R."/>
            <person name="Hu C.H."/>
            <person name="Huitema E."/>
            <person name="Jeong D.H."/>
            <person name="Jones A.M."/>
            <person name="Jones J.D."/>
            <person name="Jones R.W."/>
            <person name="Karlsson E.K."/>
            <person name="Kunjeti S.G."/>
            <person name="Lamour K."/>
            <person name="Liu Z."/>
            <person name="Ma L."/>
            <person name="Maclean D."/>
            <person name="Chibucos M.C."/>
            <person name="McDonald H."/>
            <person name="McWalters J."/>
            <person name="Meijer H.J."/>
            <person name="Morgan W."/>
            <person name="Morris P.F."/>
            <person name="Munro C.A."/>
            <person name="O'Neill K."/>
            <person name="Ospina-Giraldo M."/>
            <person name="Pinzon A."/>
            <person name="Pritchard L."/>
            <person name="Ramsahoye B."/>
            <person name="Ren Q."/>
            <person name="Restrepo S."/>
            <person name="Roy S."/>
            <person name="Sadanandom A."/>
            <person name="Savidor A."/>
            <person name="Schornack S."/>
            <person name="Schwartz D.C."/>
            <person name="Schumann U.D."/>
            <person name="Schwessinger B."/>
            <person name="Seyer L."/>
            <person name="Sharpe T."/>
            <person name="Silvar C."/>
            <person name="Song J."/>
            <person name="Studholme D.J."/>
            <person name="Sykes S."/>
            <person name="Thines M."/>
            <person name="van de Vondervoort P.J."/>
            <person name="Phuntumart V."/>
            <person name="Wawra S."/>
            <person name="Weide R."/>
            <person name="Win J."/>
            <person name="Young C."/>
            <person name="Zhou S."/>
            <person name="Fry W."/>
            <person name="Meyers B.C."/>
            <person name="van West P."/>
            <person name="Ristaino J."/>
            <person name="Govers F."/>
            <person name="Birch P.R."/>
            <person name="Whisson S.C."/>
            <person name="Judelson H.S."/>
            <person name="Nusbaum C."/>
        </authorList>
    </citation>
    <scope>NUCLEOTIDE SEQUENCE [LARGE SCALE GENOMIC DNA]</scope>
    <source>
        <strain>T30-4</strain>
    </source>
</reference>
<reference key="2">
    <citation type="journal article" date="2017" name="BMC Genomics">
        <title>RNA-seq of life stages of the oomycete Phytophthora infestans reveals dynamic changes in metabolic, signal transduction, and pathogenesis genes and a major role for calcium signaling in development.</title>
        <authorList>
            <person name="Ah-Fong A.M."/>
            <person name="Kim K.S."/>
            <person name="Judelson H.S."/>
        </authorList>
    </citation>
    <scope>INDUCTION</scope>
</reference>
<reference key="3">
    <citation type="journal article" date="2017" name="Front. Plant Sci.">
        <title>Conserved RXLR effector genes of Phytophthora infestans expressed at the early stage of potato infection are suppressive to host defense.</title>
        <authorList>
            <person name="Yin J."/>
            <person name="Gu B."/>
            <person name="Huang G."/>
            <person name="Tian Y."/>
            <person name="Quan J."/>
            <person name="Lindqvist-Kreuze H."/>
            <person name="Shan W."/>
        </authorList>
    </citation>
    <scope>INDUCTION</scope>
    <scope>DOMAIN</scope>
</reference>
<reference key="4">
    <citation type="journal article" date="2019" name="J. Exp. Bot.">
        <title>Phytophthora infestans RXLR effectors act in concert at diverse subcellular locations to enhance host colonization.</title>
        <authorList>
            <person name="Wang S."/>
            <person name="McLellan H."/>
            <person name="Bukharova T."/>
            <person name="He Q."/>
            <person name="Murphy F."/>
            <person name="Shi J."/>
            <person name="Sun S."/>
            <person name="van Weymers P."/>
            <person name="Ren Y."/>
            <person name="Thilliez G."/>
            <person name="Wang H."/>
            <person name="Chen X."/>
            <person name="Engelhardt S."/>
            <person name="Vleeshouwers V."/>
            <person name="Gilroy E.M."/>
            <person name="Whisson S.C."/>
            <person name="Hein I."/>
            <person name="Wang X."/>
            <person name="Tian Z."/>
            <person name="Birch P.R.J."/>
            <person name="Boevink P.C."/>
        </authorList>
    </citation>
    <scope>FUNCTION</scope>
    <scope>SUBCELLULAR LOCATION</scope>
</reference>
<proteinExistence type="evidence at transcript level"/>
<feature type="signal peptide" evidence="1">
    <location>
        <begin position="1"/>
        <end position="20"/>
    </location>
</feature>
<feature type="chain" id="PRO_5003013020" description="RxLR effector protein PITG_06094">
    <location>
        <begin position="21"/>
        <end position="162"/>
    </location>
</feature>
<feature type="region of interest" description="Disordered" evidence="2">
    <location>
        <begin position="56"/>
        <end position="88"/>
    </location>
</feature>
<feature type="short sequence motif" description="RxLR-dEER" evidence="8">
    <location>
        <begin position="51"/>
        <end position="91"/>
    </location>
</feature>
<dbReference type="EMBL" id="DS028126">
    <property type="protein sequence ID" value="EEY70630.1"/>
    <property type="molecule type" value="Genomic_DNA"/>
</dbReference>
<dbReference type="RefSeq" id="XP_002998284.1">
    <property type="nucleotide sequence ID" value="XM_002998238.1"/>
</dbReference>
<dbReference type="SMR" id="D0N6D9"/>
<dbReference type="EnsemblProtists" id="PITG_06094T0">
    <property type="protein sequence ID" value="PITG_06094T0"/>
    <property type="gene ID" value="PITG_06094"/>
</dbReference>
<dbReference type="GeneID" id="9472253"/>
<dbReference type="KEGG" id="pif:PITG_06094"/>
<dbReference type="VEuPathDB" id="FungiDB:PITG_06094"/>
<dbReference type="eggNOG" id="ENOG502RFCT">
    <property type="taxonomic scope" value="Eukaryota"/>
</dbReference>
<dbReference type="HOGENOM" id="CLU_1681417_0_0_1"/>
<dbReference type="InParanoid" id="D0N6D9"/>
<dbReference type="OMA" id="DKHCTYY"/>
<dbReference type="OrthoDB" id="125050at2759"/>
<dbReference type="Proteomes" id="UP000006643">
    <property type="component" value="Partially assembled WGS sequence"/>
</dbReference>
<dbReference type="GO" id="GO:0005576">
    <property type="term" value="C:extracellular region"/>
    <property type="evidence" value="ECO:0007669"/>
    <property type="project" value="UniProtKB-SubCell"/>
</dbReference>
<dbReference type="GO" id="GO:0030430">
    <property type="term" value="C:host cell cytoplasm"/>
    <property type="evidence" value="ECO:0007669"/>
    <property type="project" value="UniProtKB-SubCell"/>
</dbReference>
<dbReference type="GO" id="GO:0044196">
    <property type="term" value="C:host cell nucleolus"/>
    <property type="evidence" value="ECO:0007669"/>
    <property type="project" value="UniProtKB-SubCell"/>
</dbReference>
<dbReference type="InterPro" id="IPR031825">
    <property type="entry name" value="RXLR"/>
</dbReference>
<dbReference type="Pfam" id="PF16810">
    <property type="entry name" value="RXLR"/>
    <property type="match status" value="1"/>
</dbReference>
<gene>
    <name type="ORF">PITG_06094</name>
</gene>
<name>RXLRF_PHYIT</name>
<comment type="function">
    <text evidence="5">Effector that enhances P.infestans colonization of Nicotiana benthamiana leaves.</text>
</comment>
<comment type="subcellular location">
    <subcellularLocation>
        <location evidence="5">Secreted</location>
    </subcellularLocation>
    <subcellularLocation>
        <location evidence="5">Host cytoplasm</location>
    </subcellularLocation>
    <subcellularLocation>
        <location evidence="5">Host nucleus</location>
        <location evidence="5">Host nucleolus</location>
    </subcellularLocation>
    <subcellularLocation>
        <location evidence="5">Host nucleus</location>
    </subcellularLocation>
</comment>
<comment type="induction">
    <text evidence="3 4">Expression is induced during host plant infection.</text>
</comment>
<comment type="domain">
    <text evidence="8">The RxLR-dEER motif acts to carry the protein into the host cell cytoplasm through binding to cell surface phosphatidylinositol-3-phosphate.</text>
</comment>
<comment type="similarity">
    <text evidence="7">Belongs to the RxLR effector family.</text>
</comment>
<sequence>MRLSFILAATLTGLLACATASDSEKIIRISNEQVLSDRQLLDTVVNDNEKRFLRAYNDAEDDSEDPKNVKNTVDAKPADESEDSELSEEERFSLIQMSNQPRYYWWFQHEMTPRDVRRALGLRAGSIKLVKRSIYRGYVKYYNKHCSYYENRKKDFCKAKEY</sequence>
<evidence type="ECO:0000255" key="1"/>
<evidence type="ECO:0000256" key="2">
    <source>
        <dbReference type="SAM" id="MobiDB-lite"/>
    </source>
</evidence>
<evidence type="ECO:0000269" key="3">
    <source>
    </source>
</evidence>
<evidence type="ECO:0000269" key="4">
    <source>
    </source>
</evidence>
<evidence type="ECO:0000269" key="5">
    <source>
    </source>
</evidence>
<evidence type="ECO:0000303" key="6">
    <source>
    </source>
</evidence>
<evidence type="ECO:0000305" key="7"/>
<evidence type="ECO:0000305" key="8">
    <source>
    </source>
</evidence>
<accession>D0N6D9</accession>